<comment type="subcellular location">
    <subcellularLocation>
        <location evidence="1">Cytoplasm</location>
    </subcellularLocation>
</comment>
<comment type="similarity">
    <text evidence="1">Belongs to the TACO1 family.</text>
</comment>
<keyword id="KW-0963">Cytoplasm</keyword>
<keyword id="KW-0238">DNA-binding</keyword>
<keyword id="KW-1185">Reference proteome</keyword>
<keyword id="KW-0804">Transcription</keyword>
<keyword id="KW-0805">Transcription regulation</keyword>
<name>Y1032_CORK4</name>
<sequence>MSGHSKWATTKHKKAANDAKRGKEFAKLIKNIEVAARTGGGDPSANPTLDDMIKKAKKASVPNDNIERARKRGSGEEAGGADWETVTYEGYGNGGVAILIECLTDNRNRAATDVRTAMNKNGGNMADAGSVAYMFNRKGVVQLPKEGNTEDDILMAVLDAGAEEVNDLGQNFEVVSAAGDLSAVRDALKEAGLEYDSAEPDYRADVKVQLDASGARKIFHLIDALEDSDDVQNVYTNMDLSDEVLAELDN</sequence>
<feature type="chain" id="PRO_1000212602" description="Probable transcriptional regulatory protein ckrop_1032">
    <location>
        <begin position="1"/>
        <end position="250"/>
    </location>
</feature>
<feature type="region of interest" description="Disordered" evidence="2">
    <location>
        <begin position="1"/>
        <end position="22"/>
    </location>
</feature>
<evidence type="ECO:0000255" key="1">
    <source>
        <dbReference type="HAMAP-Rule" id="MF_00693"/>
    </source>
</evidence>
<evidence type="ECO:0000256" key="2">
    <source>
        <dbReference type="SAM" id="MobiDB-lite"/>
    </source>
</evidence>
<protein>
    <recommendedName>
        <fullName evidence="1">Probable transcriptional regulatory protein ckrop_1032</fullName>
    </recommendedName>
</protein>
<reference key="1">
    <citation type="journal article" date="2008" name="J. Biotechnol.">
        <title>Ultrafast pyrosequencing of Corynebacterium kroppenstedtii DSM44385 revealed insights into the physiology of a lipophilic corynebacterium that lacks mycolic acids.</title>
        <authorList>
            <person name="Tauch A."/>
            <person name="Schneider J."/>
            <person name="Szczepanowski R."/>
            <person name="Tilker A."/>
            <person name="Viehoever P."/>
            <person name="Gartemann K.-H."/>
            <person name="Arnold W."/>
            <person name="Blom J."/>
            <person name="Brinkrolf K."/>
            <person name="Brune I."/>
            <person name="Goetker S."/>
            <person name="Weisshaar B."/>
            <person name="Goesmann A."/>
            <person name="Droege M."/>
            <person name="Puehler A."/>
        </authorList>
    </citation>
    <scope>NUCLEOTIDE SEQUENCE [LARGE SCALE GENOMIC DNA]</scope>
    <source>
        <strain>DSM 44385 / JCM 11950 / CIP 105744 / CCUG 35717</strain>
    </source>
</reference>
<gene>
    <name type="ordered locus">ckrop_1032</name>
</gene>
<dbReference type="EMBL" id="CP001620">
    <property type="protein sequence ID" value="ACR17785.1"/>
    <property type="molecule type" value="Genomic_DNA"/>
</dbReference>
<dbReference type="RefSeq" id="WP_012731672.1">
    <property type="nucleotide sequence ID" value="NC_012704.1"/>
</dbReference>
<dbReference type="SMR" id="C4LIY0"/>
<dbReference type="STRING" id="645127.ckrop_1032"/>
<dbReference type="KEGG" id="ckp:ckrop_1032"/>
<dbReference type="eggNOG" id="COG0217">
    <property type="taxonomic scope" value="Bacteria"/>
</dbReference>
<dbReference type="HOGENOM" id="CLU_062974_2_2_11"/>
<dbReference type="OrthoDB" id="9781053at2"/>
<dbReference type="Proteomes" id="UP000001473">
    <property type="component" value="Chromosome"/>
</dbReference>
<dbReference type="GO" id="GO:0005829">
    <property type="term" value="C:cytosol"/>
    <property type="evidence" value="ECO:0007669"/>
    <property type="project" value="TreeGrafter"/>
</dbReference>
<dbReference type="GO" id="GO:0003677">
    <property type="term" value="F:DNA binding"/>
    <property type="evidence" value="ECO:0007669"/>
    <property type="project" value="UniProtKB-UniRule"/>
</dbReference>
<dbReference type="GO" id="GO:0006355">
    <property type="term" value="P:regulation of DNA-templated transcription"/>
    <property type="evidence" value="ECO:0007669"/>
    <property type="project" value="UniProtKB-UniRule"/>
</dbReference>
<dbReference type="FunFam" id="1.10.10.200:FF:000002">
    <property type="entry name" value="Probable transcriptional regulatory protein CLM62_37755"/>
    <property type="match status" value="1"/>
</dbReference>
<dbReference type="Gene3D" id="1.10.10.200">
    <property type="match status" value="1"/>
</dbReference>
<dbReference type="Gene3D" id="3.30.70.980">
    <property type="match status" value="2"/>
</dbReference>
<dbReference type="HAMAP" id="MF_00693">
    <property type="entry name" value="Transcrip_reg_TACO1"/>
    <property type="match status" value="1"/>
</dbReference>
<dbReference type="InterPro" id="IPR017856">
    <property type="entry name" value="Integrase-like_N"/>
</dbReference>
<dbReference type="InterPro" id="IPR048300">
    <property type="entry name" value="TACO1_YebC-like_2nd/3rd_dom"/>
</dbReference>
<dbReference type="InterPro" id="IPR049083">
    <property type="entry name" value="TACO1_YebC_N"/>
</dbReference>
<dbReference type="InterPro" id="IPR002876">
    <property type="entry name" value="Transcrip_reg_TACO1-like"/>
</dbReference>
<dbReference type="InterPro" id="IPR026564">
    <property type="entry name" value="Transcrip_reg_TACO1-like_dom3"/>
</dbReference>
<dbReference type="InterPro" id="IPR029072">
    <property type="entry name" value="YebC-like"/>
</dbReference>
<dbReference type="NCBIfam" id="NF001030">
    <property type="entry name" value="PRK00110.1"/>
    <property type="match status" value="1"/>
</dbReference>
<dbReference type="NCBIfam" id="NF009044">
    <property type="entry name" value="PRK12378.1"/>
    <property type="match status" value="1"/>
</dbReference>
<dbReference type="NCBIfam" id="TIGR01033">
    <property type="entry name" value="YebC/PmpR family DNA-binding transcriptional regulator"/>
    <property type="match status" value="1"/>
</dbReference>
<dbReference type="PANTHER" id="PTHR12532:SF6">
    <property type="entry name" value="TRANSCRIPTIONAL REGULATORY PROTEIN YEBC-RELATED"/>
    <property type="match status" value="1"/>
</dbReference>
<dbReference type="PANTHER" id="PTHR12532">
    <property type="entry name" value="TRANSLATIONAL ACTIVATOR OF CYTOCHROME C OXIDASE 1"/>
    <property type="match status" value="1"/>
</dbReference>
<dbReference type="Pfam" id="PF20772">
    <property type="entry name" value="TACO1_YebC_N"/>
    <property type="match status" value="1"/>
</dbReference>
<dbReference type="Pfam" id="PF01709">
    <property type="entry name" value="Transcrip_reg"/>
    <property type="match status" value="1"/>
</dbReference>
<dbReference type="SUPFAM" id="SSF75625">
    <property type="entry name" value="YebC-like"/>
    <property type="match status" value="1"/>
</dbReference>
<organism>
    <name type="scientific">Corynebacterium kroppenstedtii (strain DSM 44385 / JCM 11950 / CIP 105744 / CCUG 35717)</name>
    <dbReference type="NCBI Taxonomy" id="645127"/>
    <lineage>
        <taxon>Bacteria</taxon>
        <taxon>Bacillati</taxon>
        <taxon>Actinomycetota</taxon>
        <taxon>Actinomycetes</taxon>
        <taxon>Mycobacteriales</taxon>
        <taxon>Corynebacteriaceae</taxon>
        <taxon>Corynebacterium</taxon>
    </lineage>
</organism>
<proteinExistence type="inferred from homology"/>
<accession>C4LIY0</accession>